<comment type="function">
    <text>Monoheme c-type cytochrome. Probable electron donor to membrane cytochrome oxidase and to periplasmic nitrite reductase.</text>
</comment>
<comment type="subunit">
    <text>Monomer.</text>
</comment>
<comment type="subcellular location">
    <subcellularLocation>
        <location>Periplasm</location>
    </subcellularLocation>
</comment>
<comment type="PTM">
    <text>Binds 1 heme c group covalently per subunit.</text>
</comment>
<comment type="sequence caution" evidence="1">
    <conflict type="erroneous initiation">
        <sequence resource="EMBL-CDS" id="CAD84013"/>
    </conflict>
</comment>
<evidence type="ECO:0000305" key="1"/>
<evidence type="ECO:0007829" key="2">
    <source>
        <dbReference type="PDB" id="1A56"/>
    </source>
</evidence>
<evidence type="ECO:0007829" key="3">
    <source>
        <dbReference type="PDB" id="4JCG"/>
    </source>
</evidence>
<keyword id="KW-0002">3D-structure</keyword>
<keyword id="KW-0249">Electron transport</keyword>
<keyword id="KW-0349">Heme</keyword>
<keyword id="KW-0408">Iron</keyword>
<keyword id="KW-0479">Metal-binding</keyword>
<keyword id="KW-0574">Periplasm</keyword>
<keyword id="KW-1185">Reference proteome</keyword>
<keyword id="KW-0732">Signal</keyword>
<keyword id="KW-0813">Transport</keyword>
<proteinExistence type="evidence at protein level"/>
<sequence>MKTAWLGTFAASALLVAGYAQADADLAKKNNCIACHQVETKVVGPALKDIAAKYADKDDAATYLAGKIKGGSSGVWGQIPMPPNVNVSDADAKALADWILTLK</sequence>
<reference key="1">
    <citation type="journal article" date="1998" name="Biophys. J.">
        <title>Primary sequence and solution conformation of ferrocytochrome c-552 from Nitrosomonas europaea.</title>
        <authorList>
            <person name="Timkovich R."/>
            <person name="Bergmann D."/>
            <person name="Arciero D.M."/>
            <person name="Hooper A.B."/>
        </authorList>
    </citation>
    <scope>NUCLEOTIDE SEQUENCE [GENOMIC DNA]</scope>
    <scope>STRUCTURE BY NMR</scope>
    <source>
        <strain>ATCC 19718 / CIP 103999 / KCTC 2705 / NBRC 14298</strain>
    </source>
</reference>
<reference key="2">
    <citation type="journal article" date="2003" name="J. Bacteriol.">
        <title>Complete genome sequence of the ammonia-oxidizing bacterium and obligate chemolithoautotroph Nitrosomonas europaea.</title>
        <authorList>
            <person name="Chain P."/>
            <person name="Lamerdin J.E."/>
            <person name="Larimer F.W."/>
            <person name="Regala W."/>
            <person name="Lao V."/>
            <person name="Land M.L."/>
            <person name="Hauser L."/>
            <person name="Hooper A.B."/>
            <person name="Klotz M.G."/>
            <person name="Norton J."/>
            <person name="Sayavedra-Soto L.A."/>
            <person name="Arciero D.M."/>
            <person name="Hommes N.G."/>
            <person name="Whittaker M.M."/>
            <person name="Arp D.J."/>
        </authorList>
    </citation>
    <scope>NUCLEOTIDE SEQUENCE [LARGE SCALE GENOMIC DNA]</scope>
    <source>
        <strain>ATCC 19718 / CIP 103999 / KCTC 2705 / NBRC 14298</strain>
    </source>
</reference>
<name>CY552_NITEU</name>
<protein>
    <recommendedName>
        <fullName>Cytochrome c-552</fullName>
    </recommendedName>
    <alternativeName>
        <fullName>Cytochrome c-551</fullName>
    </alternativeName>
    <alternativeName>
        <fullName>Cytochrome c552</fullName>
    </alternativeName>
</protein>
<feature type="signal peptide">
    <location>
        <begin position="1"/>
        <end position="22"/>
    </location>
</feature>
<feature type="chain" id="PRO_0000006532" description="Cytochrome c-552">
    <location>
        <begin position="23"/>
        <end position="103"/>
    </location>
</feature>
<feature type="binding site" description="covalent">
    <location>
        <position position="32"/>
    </location>
    <ligand>
        <name>heme c</name>
        <dbReference type="ChEBI" id="CHEBI:61717"/>
    </ligand>
</feature>
<feature type="binding site" description="covalent">
    <location>
        <position position="35"/>
    </location>
    <ligand>
        <name>heme c</name>
        <dbReference type="ChEBI" id="CHEBI:61717"/>
    </ligand>
</feature>
<feature type="binding site" description="axial binding residue">
    <location>
        <position position="36"/>
    </location>
    <ligand>
        <name>heme c</name>
        <dbReference type="ChEBI" id="CHEBI:61717"/>
    </ligand>
    <ligandPart>
        <name>Fe</name>
        <dbReference type="ChEBI" id="CHEBI:18248"/>
    </ligandPart>
</feature>
<feature type="binding site" description="axial binding residue">
    <location>
        <position position="81"/>
    </location>
    <ligand>
        <name>heme c</name>
        <dbReference type="ChEBI" id="CHEBI:61717"/>
    </ligand>
    <ligandPart>
        <name>Fe</name>
        <dbReference type="ChEBI" id="CHEBI:18248"/>
    </ligandPart>
</feature>
<feature type="sequence conflict" description="In Ref. 1; AAB46987." evidence="1" ref="1">
    <original>A</original>
    <variation>G</variation>
    <location>
        <position position="11"/>
    </location>
</feature>
<feature type="helix" evidence="3">
    <location>
        <begin position="24"/>
        <end position="29"/>
    </location>
</feature>
<feature type="turn" evidence="3">
    <location>
        <begin position="33"/>
        <end position="35"/>
    </location>
</feature>
<feature type="strand" evidence="3">
    <location>
        <begin position="38"/>
        <end position="40"/>
    </location>
</feature>
<feature type="strand" evidence="3">
    <location>
        <begin position="42"/>
        <end position="44"/>
    </location>
</feature>
<feature type="helix" evidence="3">
    <location>
        <begin position="47"/>
        <end position="53"/>
    </location>
</feature>
<feature type="turn" evidence="3">
    <location>
        <begin position="54"/>
        <end position="56"/>
    </location>
</feature>
<feature type="strand" evidence="2">
    <location>
        <begin position="57"/>
        <end position="59"/>
    </location>
</feature>
<feature type="helix" evidence="3">
    <location>
        <begin position="60"/>
        <end position="70"/>
    </location>
</feature>
<feature type="strand" evidence="3">
    <location>
        <begin position="74"/>
        <end position="79"/>
    </location>
</feature>
<feature type="helix" evidence="3">
    <location>
        <begin position="89"/>
        <end position="101"/>
    </location>
</feature>
<organism>
    <name type="scientific">Nitrosomonas europaea (strain ATCC 19718 / CIP 103999 / KCTC 2705 / NBRC 14298)</name>
    <dbReference type="NCBI Taxonomy" id="228410"/>
    <lineage>
        <taxon>Bacteria</taxon>
        <taxon>Pseudomonadati</taxon>
        <taxon>Pseudomonadota</taxon>
        <taxon>Betaproteobacteria</taxon>
        <taxon>Nitrosomonadales</taxon>
        <taxon>Nitrosomonadaceae</taxon>
        <taxon>Nitrosomonas</taxon>
    </lineage>
</organism>
<accession>P95339</accession>
<dbReference type="EMBL" id="U86756">
    <property type="protein sequence ID" value="AAB46987.1"/>
    <property type="molecule type" value="Genomic_DNA"/>
</dbReference>
<dbReference type="EMBL" id="AL954747">
    <property type="protein sequence ID" value="CAD84013.1"/>
    <property type="status" value="ALT_INIT"/>
    <property type="molecule type" value="Genomic_DNA"/>
</dbReference>
<dbReference type="RefSeq" id="WP_041356284.1">
    <property type="nucleotide sequence ID" value="NC_004757.1"/>
</dbReference>
<dbReference type="PDB" id="1A56">
    <property type="method" value="NMR"/>
    <property type="chains" value="A=23-103"/>
</dbReference>
<dbReference type="PDB" id="1A8C">
    <property type="method" value="NMR"/>
    <property type="chains" value="A=23-103"/>
</dbReference>
<dbReference type="PDB" id="3ZOW">
    <property type="method" value="X-ray"/>
    <property type="resolution" value="2.35 A"/>
    <property type="chains" value="A/B/C/D/E/F/G/H/I/J/K/L/M/N/O/P/Q/R=23-103"/>
</dbReference>
<dbReference type="PDB" id="3ZOX">
    <property type="method" value="X-ray"/>
    <property type="resolution" value="2.10 A"/>
    <property type="chains" value="A/B/C/D=23-103"/>
</dbReference>
<dbReference type="PDB" id="3ZOY">
    <property type="method" value="X-ray"/>
    <property type="resolution" value="2.30 A"/>
    <property type="chains" value="A/B/C/D=23-103"/>
</dbReference>
<dbReference type="PDB" id="4JCG">
    <property type="method" value="X-ray"/>
    <property type="resolution" value="1.63 A"/>
    <property type="chains" value="A=23-103"/>
</dbReference>
<dbReference type="PDBsum" id="1A56"/>
<dbReference type="PDBsum" id="1A8C"/>
<dbReference type="PDBsum" id="3ZOW"/>
<dbReference type="PDBsum" id="3ZOX"/>
<dbReference type="PDBsum" id="3ZOY"/>
<dbReference type="PDBsum" id="4JCG"/>
<dbReference type="SMR" id="P95339"/>
<dbReference type="STRING" id="228410.NE0102"/>
<dbReference type="GeneID" id="87103316"/>
<dbReference type="KEGG" id="neu:NE0102"/>
<dbReference type="eggNOG" id="COG4654">
    <property type="taxonomic scope" value="Bacteria"/>
</dbReference>
<dbReference type="HOGENOM" id="CLU_133112_1_0_4"/>
<dbReference type="OrthoDB" id="9811281at2"/>
<dbReference type="EvolutionaryTrace" id="P95339"/>
<dbReference type="Proteomes" id="UP000001416">
    <property type="component" value="Chromosome"/>
</dbReference>
<dbReference type="GO" id="GO:0042597">
    <property type="term" value="C:periplasmic space"/>
    <property type="evidence" value="ECO:0007669"/>
    <property type="project" value="UniProtKB-SubCell"/>
</dbReference>
<dbReference type="GO" id="GO:0009055">
    <property type="term" value="F:electron transfer activity"/>
    <property type="evidence" value="ECO:0007669"/>
    <property type="project" value="InterPro"/>
</dbReference>
<dbReference type="GO" id="GO:0020037">
    <property type="term" value="F:heme binding"/>
    <property type="evidence" value="ECO:0007669"/>
    <property type="project" value="InterPro"/>
</dbReference>
<dbReference type="GO" id="GO:0005506">
    <property type="term" value="F:iron ion binding"/>
    <property type="evidence" value="ECO:0007669"/>
    <property type="project" value="InterPro"/>
</dbReference>
<dbReference type="Gene3D" id="1.10.760.10">
    <property type="entry name" value="Cytochrome c-like domain"/>
    <property type="match status" value="1"/>
</dbReference>
<dbReference type="InterPro" id="IPR009056">
    <property type="entry name" value="Cyt_c-like_dom"/>
</dbReference>
<dbReference type="InterPro" id="IPR036909">
    <property type="entry name" value="Cyt_c-like_dom_sf"/>
</dbReference>
<dbReference type="InterPro" id="IPR002324">
    <property type="entry name" value="Cyt_c_ID"/>
</dbReference>
<dbReference type="Pfam" id="PF00034">
    <property type="entry name" value="Cytochrom_C"/>
    <property type="match status" value="1"/>
</dbReference>
<dbReference type="PRINTS" id="PR00606">
    <property type="entry name" value="CYTCHROMECID"/>
</dbReference>
<dbReference type="SUPFAM" id="SSF46626">
    <property type="entry name" value="Cytochrome c"/>
    <property type="match status" value="1"/>
</dbReference>
<dbReference type="PROSITE" id="PS51007">
    <property type="entry name" value="CYTC"/>
    <property type="match status" value="1"/>
</dbReference>
<gene>
    <name type="primary">cyt</name>
    <name type="synonym">cyt_c552</name>
    <name type="ordered locus">NE0102</name>
</gene>